<dbReference type="EC" id="7.1.1.2"/>
<dbReference type="EMBL" id="AF447590">
    <property type="protein sequence ID" value="AAL74175.1"/>
    <property type="status" value="ALT_INIT"/>
    <property type="molecule type" value="Genomic_DNA"/>
</dbReference>
<dbReference type="RefSeq" id="NP_570155.1">
    <property type="nucleotide sequence ID" value="NC_003388.1"/>
</dbReference>
<dbReference type="SMR" id="Q8SHP8"/>
<dbReference type="GeneID" id="804638"/>
<dbReference type="GO" id="GO:0031966">
    <property type="term" value="C:mitochondrial membrane"/>
    <property type="evidence" value="ECO:0007669"/>
    <property type="project" value="UniProtKB-SubCell"/>
</dbReference>
<dbReference type="GO" id="GO:0030964">
    <property type="term" value="C:NADH dehydrogenase complex"/>
    <property type="evidence" value="ECO:0007669"/>
    <property type="project" value="TreeGrafter"/>
</dbReference>
<dbReference type="GO" id="GO:0008137">
    <property type="term" value="F:NADH dehydrogenase (ubiquinone) activity"/>
    <property type="evidence" value="ECO:0007669"/>
    <property type="project" value="UniProtKB-EC"/>
</dbReference>
<dbReference type="GO" id="GO:0042773">
    <property type="term" value="P:ATP synthesis coupled electron transport"/>
    <property type="evidence" value="ECO:0007669"/>
    <property type="project" value="InterPro"/>
</dbReference>
<dbReference type="FunFam" id="1.10.287.3510:FF:000004">
    <property type="entry name" value="NADH-ubiquinone oxidoreductase chain 4L"/>
    <property type="match status" value="1"/>
</dbReference>
<dbReference type="Gene3D" id="1.10.287.3510">
    <property type="match status" value="1"/>
</dbReference>
<dbReference type="InterPro" id="IPR001133">
    <property type="entry name" value="NADH_UbQ_OxRdtase_chain4L/K"/>
</dbReference>
<dbReference type="InterPro" id="IPR039428">
    <property type="entry name" value="NUOK/Mnh_C1-like"/>
</dbReference>
<dbReference type="NCBIfam" id="NF004320">
    <property type="entry name" value="PRK05715.1-2"/>
    <property type="match status" value="1"/>
</dbReference>
<dbReference type="PANTHER" id="PTHR11434:SF16">
    <property type="entry name" value="NADH-UBIQUINONE OXIDOREDUCTASE CHAIN 4L"/>
    <property type="match status" value="1"/>
</dbReference>
<dbReference type="PANTHER" id="PTHR11434">
    <property type="entry name" value="NADH-UBIQUINONE OXIDOREDUCTASE SUBUNIT ND4L"/>
    <property type="match status" value="1"/>
</dbReference>
<dbReference type="Pfam" id="PF00420">
    <property type="entry name" value="Oxidored_q2"/>
    <property type="match status" value="1"/>
</dbReference>
<protein>
    <recommendedName>
        <fullName>NADH-ubiquinone oxidoreductase chain 4L</fullName>
        <ecNumber>7.1.1.2</ecNumber>
    </recommendedName>
    <alternativeName>
        <fullName>NADH dehydrogenase subunit 4L</fullName>
    </alternativeName>
</protein>
<accession>Q8SHP8</accession>
<geneLocation type="mitochondrion"/>
<reference key="1">
    <citation type="journal article" date="2002" name="J. Biol. Chem.">
        <title>Elucidation of the metabolic fate of glucose in the filamentous fungus Trichoderma reesei using expressed sequence tag (EST) analysis and cDNA microarrays.</title>
        <authorList>
            <person name="Chambergo F.S."/>
            <person name="Bonaccorsi E.D."/>
            <person name="Ferreira A.J.S."/>
            <person name="Ramos A.S.P."/>
            <person name="Ferreira J.R. Jr."/>
            <person name="Abrahao-Neto J."/>
            <person name="Farah J.P.S."/>
            <person name="El-Dorry H."/>
        </authorList>
    </citation>
    <scope>NUCLEOTIDE SEQUENCE [GENOMIC DNA]</scope>
</reference>
<comment type="function">
    <text evidence="1">Core subunit of the mitochondrial membrane respiratory chain NADH dehydrogenase (Complex I) that is believed to belong to the minimal assembly required for catalysis. Complex I functions in the transfer of electrons from NADH to the respiratory chain. The immediate electron acceptor for the enzyme is believed to be ubiquinone (By similarity).</text>
</comment>
<comment type="catalytic activity">
    <reaction>
        <text>a ubiquinone + NADH + 5 H(+)(in) = a ubiquinol + NAD(+) + 4 H(+)(out)</text>
        <dbReference type="Rhea" id="RHEA:29091"/>
        <dbReference type="Rhea" id="RHEA-COMP:9565"/>
        <dbReference type="Rhea" id="RHEA-COMP:9566"/>
        <dbReference type="ChEBI" id="CHEBI:15378"/>
        <dbReference type="ChEBI" id="CHEBI:16389"/>
        <dbReference type="ChEBI" id="CHEBI:17976"/>
        <dbReference type="ChEBI" id="CHEBI:57540"/>
        <dbReference type="ChEBI" id="CHEBI:57945"/>
        <dbReference type="EC" id="7.1.1.2"/>
    </reaction>
</comment>
<comment type="subcellular location">
    <subcellularLocation>
        <location evidence="1">Mitochondrion membrane</location>
        <topology evidence="1">Multi-pass membrane protein</topology>
    </subcellularLocation>
</comment>
<comment type="similarity">
    <text evidence="3">Belongs to the complex I subunit 4L family.</text>
</comment>
<comment type="sequence caution" evidence="3">
    <conflict type="erroneous initiation">
        <sequence resource="EMBL-CDS" id="AAL74175"/>
    </conflict>
</comment>
<organism>
    <name type="scientific">Hypocrea jecorina</name>
    <name type="common">Trichoderma reesei</name>
    <dbReference type="NCBI Taxonomy" id="51453"/>
    <lineage>
        <taxon>Eukaryota</taxon>
        <taxon>Fungi</taxon>
        <taxon>Dikarya</taxon>
        <taxon>Ascomycota</taxon>
        <taxon>Pezizomycotina</taxon>
        <taxon>Sordariomycetes</taxon>
        <taxon>Hypocreomycetidae</taxon>
        <taxon>Hypocreales</taxon>
        <taxon>Hypocreaceae</taxon>
        <taxon>Trichoderma</taxon>
    </lineage>
</organism>
<sequence length="89" mass="9808">MSLTLVLFLIGILGFVFNRKNIILMLISIEIMLLSITFLILVSSINLDDIIGQTYAIYIIVVAGAESAIGLAILVAFYRLRGSIAIEYK</sequence>
<proteinExistence type="inferred from homology"/>
<keyword id="KW-0249">Electron transport</keyword>
<keyword id="KW-0472">Membrane</keyword>
<keyword id="KW-0496">Mitochondrion</keyword>
<keyword id="KW-0520">NAD</keyword>
<keyword id="KW-0679">Respiratory chain</keyword>
<keyword id="KW-1278">Translocase</keyword>
<keyword id="KW-0812">Transmembrane</keyword>
<keyword id="KW-1133">Transmembrane helix</keyword>
<keyword id="KW-0813">Transport</keyword>
<keyword id="KW-0830">Ubiquinone</keyword>
<gene>
    <name type="primary">ND4L</name>
    <name type="synonym">NAD4L</name>
</gene>
<name>NU4LM_HYPJE</name>
<evidence type="ECO:0000250" key="1"/>
<evidence type="ECO:0000255" key="2"/>
<evidence type="ECO:0000305" key="3"/>
<feature type="chain" id="PRO_0000118498" description="NADH-ubiquinone oxidoreductase chain 4L">
    <location>
        <begin position="1"/>
        <end position="89"/>
    </location>
</feature>
<feature type="transmembrane region" description="Helical" evidence="2">
    <location>
        <begin position="1"/>
        <end position="21"/>
    </location>
</feature>
<feature type="transmembrane region" description="Helical" evidence="2">
    <location>
        <begin position="22"/>
        <end position="42"/>
    </location>
</feature>
<feature type="transmembrane region" description="Helical" evidence="2">
    <location>
        <begin position="57"/>
        <end position="77"/>
    </location>
</feature>